<comment type="function">
    <text evidence="5 8 11 14 15 16 17 20 21">Key adapter protein that plays an essential role in JNK and NF-kappa-B activation and proinflammatory cytokines production in response to stimulation with TLRs and cytokines (PubMed:22307082, PubMed:24403530). Mechanistically, associates with the catalytic domain of MAP3K7/TAK1 to trigger MAP3K7/TAK1 autophosphorylation leading to its full activation (PubMed:10838074, PubMed:25260751, PubMed:37832545). Similarly, associates with MAPK14 and triggers its autophosphorylation and subsequent activation (PubMed:11847341, PubMed:29229647). In turn, MAPK14 phosphorylates TAB1 and inhibits MAP3K7/TAK1 activation in a feedback control mechanism (PubMed:14592977). Also plays a role in recruiting MAPK14 to the TAK1 complex for the phosphorylation of the TAB2 and TAB3 regulatory subunits (PubMed:18021073).</text>
</comment>
<comment type="subunit">
    <text evidence="4 5 6 7 8 9 13 21 22">Interacts with XIAP and BIRC7 (PubMed:11865055, PubMed:17560374). Interacts with TRAF6 and MAP3K7; during IL-1 signaling (PubMed:10094049, PubMed:10838074, PubMed:11323434, PubMed:8638164). Identified in the TRIKA2 complex composed of MAP3K7, TAB1 and TAB2 (PubMed:11460167). Interacts with TRAF6 and MAPK14; these interactions allow MAPK14 autophosphorylation (PubMed:11847341). Interacts with STING1; interaction takes place following cGAMP activation and promotes TAB1 recruitment to the endoplasmic reticulum, triggering MAP3K7/TAK1 activation and STING1 phosphorylation (PubMed:37832545).</text>
</comment>
<comment type="interaction">
    <interactant intactId="EBI-358643">
        <id>Q15750</id>
    </interactant>
    <interactant intactId="EBI-297353">
        <id>P00533</id>
        <label>EGFR</label>
    </interactant>
    <organismsDiffer>false</organismsDiffer>
    <experiments>3</experiments>
</comment>
<comment type="interaction">
    <interactant intactId="EBI-358643">
        <id>Q15750</id>
    </interactant>
    <interactant intactId="EBI-357504">
        <id>P47929</id>
        <label>LGALS7B</label>
    </interactant>
    <organismsDiffer>false</organismsDiffer>
    <experiments>3</experiments>
</comment>
<comment type="interaction">
    <interactant intactId="EBI-358643">
        <id>Q15750</id>
    </interactant>
    <interactant intactId="EBI-358684">
        <id>O43318</id>
        <label>MAP3K7</label>
    </interactant>
    <organismsDiffer>false</organismsDiffer>
    <experiments>10</experiments>
</comment>
<comment type="interaction">
    <interactant intactId="EBI-358643">
        <id>Q15750</id>
    </interactant>
    <interactant intactId="EBI-358700">
        <id>O43318-2</id>
        <label>MAP3K7</label>
    </interactant>
    <organismsDiffer>false</organismsDiffer>
    <experiments>3</experiments>
</comment>
<comment type="interaction">
    <interactant intactId="EBI-358643">
        <id>Q15750</id>
    </interactant>
    <interactant intactId="EBI-539828">
        <id>O15294</id>
        <label>OGT</label>
    </interactant>
    <organismsDiffer>false</organismsDiffer>
    <experiments>3</experiments>
</comment>
<comment type="interaction">
    <interactant intactId="EBI-358643">
        <id>Q15750</id>
    </interactant>
    <interactant intactId="EBI-358708">
        <id>Q9NYJ8</id>
        <label>TAB2</label>
    </interactant>
    <organismsDiffer>false</organismsDiffer>
    <experiments>9</experiments>
</comment>
<comment type="interaction">
    <interactant intactId="EBI-358643">
        <id>Q15750</id>
    </interactant>
    <interactant intactId="EBI-517127">
        <id>P98170</id>
        <label>XIAP</label>
    </interactant>
    <organismsDiffer>false</organismsDiffer>
    <experiments>5</experiments>
</comment>
<comment type="interaction">
    <interactant intactId="EBI-358643">
        <id>Q15750</id>
    </interactant>
    <interactant intactId="EBI-356498">
        <id>P62258</id>
        <label>YWHAE</label>
    </interactant>
    <organismsDiffer>false</organismsDiffer>
    <experiments>2</experiments>
</comment>
<comment type="interaction">
    <interactant intactId="EBI-358643">
        <id>Q15750</id>
    </interactant>
    <interactant intactId="EBI-25475864">
        <id>PRO_0000449623</id>
        <label>rep</label>
        <dbReference type="UniProtKB" id="P0DTD1"/>
    </interactant>
    <organismsDiffer>true</organismsDiffer>
    <experiments>2</experiments>
</comment>
<comment type="subcellular location">
    <subcellularLocation>
        <location evidence="21">Cytoplasm</location>
        <location evidence="21">Cytosol</location>
    </subcellularLocation>
    <subcellularLocation>
        <location evidence="21">Endoplasmic reticulum membrane</location>
        <topology evidence="21">Peripheral membrane protein</topology>
        <orientation evidence="21">Cytoplasmic side</orientation>
    </subcellularLocation>
    <text evidence="21">Recruited to the endoplasmic reticulum following interaction with STING1.</text>
</comment>
<comment type="alternative products">
    <event type="alternative splicing"/>
    <isoform>
        <id>Q15750-1</id>
        <name>1</name>
        <name>TAB1alpha</name>
        <sequence type="displayed"/>
    </isoform>
    <isoform>
        <id>Q15750-2</id>
        <name>2</name>
        <name>TAB1beta</name>
        <sequence type="described" ref="VSP_042024"/>
    </isoform>
</comment>
<comment type="tissue specificity">
    <text evidence="10">Ubiquitous.</text>
</comment>
<comment type="PTM">
    <text evidence="11 16">Phosphorylated at all three sites Ser-423, Thr-431 and Ser-438 by MAPK14 when cells were exposed to cellular stresses, or stimulated with TNF-alpha, IL1 or LPS (PubMed:14592977). These phosphorylations inhibit TAK1 activation by a feedback control mechanism (PubMed:14592977). Dephosphorylated by DUSP14 at Ser-438, leading to TAB1-MAP3K7/TAK1 complex inactivation in T-cells (PubMed:24403530).</text>
</comment>
<comment type="PTM">
    <text evidence="1 17 18">Ubiquitinated by MAP3K1 with 'Lys-63'-linked polyubiquitin; leading to activation of TAK1 and of JNK and p38 MAP kinases following EGF and TGF-beta stimulation (PubMed:25260751). Ubiquitinated by ITCH with 'Lys-48'-linked polyubiquitin; leading to proteasomal degradation (PubMed:25714464). Ubiquitinated by RNF114 during maternal-to-zygotic transition; leading to degradation (By similarity).</text>
</comment>
<comment type="PTM">
    <text evidence="12">(Microbial infection) Deubiquitinated by Y.enterocolitica YopP.</text>
</comment>
<comment type="PTM">
    <text evidence="15 19">O-GlcNAcylated at Ser-395 by OGT is required for full MAP3K7/TAK1 activation upon stimulation with IL-1 or osmotic stress (PubMed:22307082). Deglycosylated at Ser-395 by OGA (PubMed:28939839).</text>
</comment>
<comment type="miscellaneous">
    <molecule>Isoform 2</molecule>
    <text evidence="25">Does not bind nor activate MAP3K7/TAK1.</text>
</comment>
<comment type="caution">
    <text evidence="24">Lacks several key residues involved in metal-binding and catalytic activity, therefore has lost phosphatase activity.</text>
</comment>
<dbReference type="EMBL" id="U49928">
    <property type="protein sequence ID" value="AAC12660.1"/>
    <property type="molecule type" value="mRNA"/>
</dbReference>
<dbReference type="EMBL" id="AF425640">
    <property type="protein sequence ID" value="AAN32760.1"/>
    <property type="molecule type" value="mRNA"/>
</dbReference>
<dbReference type="EMBL" id="DQ314876">
    <property type="protein sequence ID" value="ABC40735.1"/>
    <property type="molecule type" value="Genomic_DNA"/>
</dbReference>
<dbReference type="EMBL" id="AL022312">
    <property type="status" value="NOT_ANNOTATED_CDS"/>
    <property type="molecule type" value="Genomic_DNA"/>
</dbReference>
<dbReference type="EMBL" id="Z83845">
    <property type="status" value="NOT_ANNOTATED_CDS"/>
    <property type="molecule type" value="Genomic_DNA"/>
</dbReference>
<dbReference type="EMBL" id="CH471095">
    <property type="protein sequence ID" value="EAW60326.1"/>
    <property type="molecule type" value="Genomic_DNA"/>
</dbReference>
<dbReference type="EMBL" id="BC050554">
    <property type="protein sequence ID" value="AAH50554.1"/>
    <property type="molecule type" value="mRNA"/>
</dbReference>
<dbReference type="CCDS" id="CCDS13992.1">
    <molecule id="Q15750-2"/>
</dbReference>
<dbReference type="CCDS" id="CCDS13993.1">
    <molecule id="Q15750-1"/>
</dbReference>
<dbReference type="RefSeq" id="NP_006107.1">
    <molecule id="Q15750-1"/>
    <property type="nucleotide sequence ID" value="NM_006116.3"/>
</dbReference>
<dbReference type="RefSeq" id="NP_705717.1">
    <molecule id="Q15750-2"/>
    <property type="nucleotide sequence ID" value="NM_153497.3"/>
</dbReference>
<dbReference type="PDB" id="2J4O">
    <property type="method" value="X-ray"/>
    <property type="resolution" value="2.25 A"/>
    <property type="chains" value="A=1-401"/>
</dbReference>
<dbReference type="PDB" id="2POM">
    <property type="method" value="X-ray"/>
    <property type="resolution" value="2.27 A"/>
    <property type="chains" value="A=1-370"/>
</dbReference>
<dbReference type="PDB" id="2POP">
    <property type="method" value="X-ray"/>
    <property type="resolution" value="3.10 A"/>
    <property type="chains" value="A/C=1-370"/>
</dbReference>
<dbReference type="PDB" id="2YDS">
    <property type="method" value="X-ray"/>
    <property type="resolution" value="2.55 A"/>
    <property type="chains" value="T=392-398"/>
</dbReference>
<dbReference type="PDB" id="2YIY">
    <property type="method" value="X-ray"/>
    <property type="resolution" value="2.49 A"/>
    <property type="chains" value="A=468-497"/>
</dbReference>
<dbReference type="PDB" id="4AY5">
    <property type="method" value="X-ray"/>
    <property type="resolution" value="3.15 A"/>
    <property type="chains" value="I/J/K/L=389-399"/>
</dbReference>
<dbReference type="PDB" id="4AY6">
    <property type="method" value="X-ray"/>
    <property type="resolution" value="3.30 A"/>
    <property type="chains" value="E/F/G/H=389-401"/>
</dbReference>
<dbReference type="PDB" id="4GS6">
    <property type="method" value="X-ray"/>
    <property type="resolution" value="2.20 A"/>
    <property type="chains" value="A=468-504"/>
</dbReference>
<dbReference type="PDB" id="4KA3">
    <property type="method" value="X-ray"/>
    <property type="resolution" value="2.71 A"/>
    <property type="chains" value="B=395-415"/>
</dbReference>
<dbReference type="PDB" id="4L3P">
    <property type="method" value="X-ray"/>
    <property type="resolution" value="2.68 A"/>
    <property type="chains" value="A=468-504"/>
</dbReference>
<dbReference type="PDB" id="4L52">
    <property type="method" value="X-ray"/>
    <property type="resolution" value="2.54 A"/>
    <property type="chains" value="A=468-496"/>
</dbReference>
<dbReference type="PDB" id="4L53">
    <property type="method" value="X-ray"/>
    <property type="resolution" value="2.55 A"/>
    <property type="chains" value="A=468-496"/>
</dbReference>
<dbReference type="PDB" id="4O91">
    <property type="method" value="X-ray"/>
    <property type="resolution" value="2.39 A"/>
    <property type="chains" value="A=468-504"/>
</dbReference>
<dbReference type="PDB" id="5DIY">
    <property type="method" value="X-ray"/>
    <property type="resolution" value="2.06 A"/>
    <property type="chains" value="P/Q=392-398"/>
</dbReference>
<dbReference type="PDB" id="5E7R">
    <property type="method" value="X-ray"/>
    <property type="resolution" value="2.11 A"/>
    <property type="chains" value="A=468-504"/>
</dbReference>
<dbReference type="PDB" id="5GJD">
    <property type="method" value="X-ray"/>
    <property type="resolution" value="2.79 A"/>
    <property type="chains" value="A=468-504"/>
</dbReference>
<dbReference type="PDB" id="5GJF">
    <property type="method" value="X-ray"/>
    <property type="resolution" value="2.89 A"/>
    <property type="chains" value="A=468-504"/>
</dbReference>
<dbReference type="PDB" id="5GJG">
    <property type="method" value="X-ray"/>
    <property type="resolution" value="2.61 A"/>
    <property type="chains" value="A=468-504"/>
</dbReference>
<dbReference type="PDB" id="5J7S">
    <property type="method" value="X-ray"/>
    <property type="resolution" value="2.37 A"/>
    <property type="chains" value="A=468-504"/>
</dbReference>
<dbReference type="PDB" id="5J8I">
    <property type="method" value="X-ray"/>
    <property type="resolution" value="2.40 A"/>
    <property type="chains" value="A=468-504"/>
</dbReference>
<dbReference type="PDB" id="5J9L">
    <property type="method" value="X-ray"/>
    <property type="resolution" value="2.75 A"/>
    <property type="chains" value="A=468-497"/>
</dbReference>
<dbReference type="PDB" id="5JGA">
    <property type="method" value="X-ray"/>
    <property type="resolution" value="2.00 A"/>
    <property type="chains" value="A=468-504"/>
</dbReference>
<dbReference type="PDB" id="5JGB">
    <property type="method" value="X-ray"/>
    <property type="resolution" value="2.80 A"/>
    <property type="chains" value="A=468-504"/>
</dbReference>
<dbReference type="PDB" id="5JGD">
    <property type="method" value="X-ray"/>
    <property type="resolution" value="3.10 A"/>
    <property type="chains" value="A=468-504"/>
</dbReference>
<dbReference type="PDB" id="5JH6">
    <property type="method" value="X-ray"/>
    <property type="resolution" value="2.37 A"/>
    <property type="chains" value="A=468-504"/>
</dbReference>
<dbReference type="PDB" id="5JK3">
    <property type="method" value="X-ray"/>
    <property type="resolution" value="2.37 A"/>
    <property type="chains" value="A=468-504"/>
</dbReference>
<dbReference type="PDB" id="5NZZ">
    <property type="method" value="X-ray"/>
    <property type="resolution" value="2.60 A"/>
    <property type="chains" value="A/B/C/D=1-504"/>
</dbReference>
<dbReference type="PDB" id="5O90">
    <property type="method" value="X-ray"/>
    <property type="resolution" value="2.49 A"/>
    <property type="chains" value="B=386-414"/>
</dbReference>
<dbReference type="PDB" id="5V5N">
    <property type="method" value="X-ray"/>
    <property type="resolution" value="2.01 A"/>
    <property type="chains" value="A=468-497"/>
</dbReference>
<dbReference type="PDB" id="5VVU">
    <property type="method" value="X-ray"/>
    <property type="resolution" value="2.70 A"/>
    <property type="chains" value="B/D=392-398"/>
</dbReference>
<dbReference type="PDB" id="7NTH">
    <property type="method" value="X-ray"/>
    <property type="resolution" value="1.97 A"/>
    <property type="chains" value="A=468-504"/>
</dbReference>
<dbReference type="PDB" id="7NTI">
    <property type="method" value="X-ray"/>
    <property type="resolution" value="1.98 A"/>
    <property type="chains" value="A=468-504"/>
</dbReference>
<dbReference type="PDB" id="8GW3">
    <property type="method" value="X-ray"/>
    <property type="resolution" value="2.05 A"/>
    <property type="chains" value="A/B/C/D=468-504"/>
</dbReference>
<dbReference type="PDB" id="8XI8">
    <property type="method" value="X-ray"/>
    <property type="resolution" value="3.35 A"/>
    <property type="chains" value="A=1-370"/>
</dbReference>
<dbReference type="PDB" id="9FPD">
    <property type="method" value="X-ray"/>
    <property type="resolution" value="2.40 A"/>
    <property type="chains" value="A=468-504"/>
</dbReference>
<dbReference type="PDBsum" id="2J4O"/>
<dbReference type="PDBsum" id="2POM"/>
<dbReference type="PDBsum" id="2POP"/>
<dbReference type="PDBsum" id="2YDS"/>
<dbReference type="PDBsum" id="2YIY"/>
<dbReference type="PDBsum" id="4AY5"/>
<dbReference type="PDBsum" id="4AY6"/>
<dbReference type="PDBsum" id="4GS6"/>
<dbReference type="PDBsum" id="4KA3"/>
<dbReference type="PDBsum" id="4L3P"/>
<dbReference type="PDBsum" id="4L52"/>
<dbReference type="PDBsum" id="4L53"/>
<dbReference type="PDBsum" id="4O91"/>
<dbReference type="PDBsum" id="5DIY"/>
<dbReference type="PDBsum" id="5E7R"/>
<dbReference type="PDBsum" id="5GJD"/>
<dbReference type="PDBsum" id="5GJF"/>
<dbReference type="PDBsum" id="5GJG"/>
<dbReference type="PDBsum" id="5J7S"/>
<dbReference type="PDBsum" id="5J8I"/>
<dbReference type="PDBsum" id="5J9L"/>
<dbReference type="PDBsum" id="5JGA"/>
<dbReference type="PDBsum" id="5JGB"/>
<dbReference type="PDBsum" id="5JGD"/>
<dbReference type="PDBsum" id="5JH6"/>
<dbReference type="PDBsum" id="5JK3"/>
<dbReference type="PDBsum" id="5NZZ"/>
<dbReference type="PDBsum" id="5O90"/>
<dbReference type="PDBsum" id="5V5N"/>
<dbReference type="PDBsum" id="5VVU"/>
<dbReference type="PDBsum" id="7NTH"/>
<dbReference type="PDBsum" id="7NTI"/>
<dbReference type="PDBsum" id="8GW3"/>
<dbReference type="PDBsum" id="8XI8"/>
<dbReference type="PDBsum" id="9FPD"/>
<dbReference type="SMR" id="Q15750"/>
<dbReference type="BioGRID" id="115717">
    <property type="interactions" value="264"/>
</dbReference>
<dbReference type="ComplexPortal" id="CPX-25729">
    <property type="entry name" value="TAK1-TAB complex, TAB2 variant"/>
</dbReference>
<dbReference type="ComplexPortal" id="CPX-25730">
    <property type="entry name" value="TAK1-TAB complex, TAB3 variant"/>
</dbReference>
<dbReference type="CORUM" id="Q15750"/>
<dbReference type="DIP" id="DIP-27524N"/>
<dbReference type="ELM" id="Q15750"/>
<dbReference type="FunCoup" id="Q15750">
    <property type="interactions" value="3347"/>
</dbReference>
<dbReference type="IntAct" id="Q15750">
    <property type="interactions" value="158"/>
</dbReference>
<dbReference type="MINT" id="Q15750"/>
<dbReference type="STRING" id="9606.ENSP00000216160"/>
<dbReference type="BindingDB" id="Q15750"/>
<dbReference type="ChEMBL" id="CHEMBL5605"/>
<dbReference type="DrugBank" id="DB06757">
    <property type="generic name" value="Manganese cation"/>
</dbReference>
<dbReference type="MoonDB" id="Q15750">
    <property type="type" value="Predicted"/>
</dbReference>
<dbReference type="DEPOD" id="TAB1"/>
<dbReference type="GlyCosmos" id="Q15750">
    <property type="glycosylation" value="10 sites, 2 glycans"/>
</dbReference>
<dbReference type="GlyGen" id="Q15750">
    <property type="glycosylation" value="15 sites, 2 O-linked glycans (14 sites)"/>
</dbReference>
<dbReference type="iPTMnet" id="Q15750"/>
<dbReference type="PhosphoSitePlus" id="Q15750"/>
<dbReference type="BioMuta" id="TAB1"/>
<dbReference type="DMDM" id="10720303"/>
<dbReference type="CPTAC" id="CPTAC-906"/>
<dbReference type="CPTAC" id="CPTAC-907"/>
<dbReference type="jPOST" id="Q15750"/>
<dbReference type="MassIVE" id="Q15750"/>
<dbReference type="PaxDb" id="9606-ENSP00000216160"/>
<dbReference type="PeptideAtlas" id="Q15750"/>
<dbReference type="ProteomicsDB" id="60741">
    <molecule id="Q15750-1"/>
</dbReference>
<dbReference type="ProteomicsDB" id="60742">
    <molecule id="Q15750-2"/>
</dbReference>
<dbReference type="Pumba" id="Q15750"/>
<dbReference type="Antibodypedia" id="12659">
    <property type="antibodies" value="630 antibodies from 44 providers"/>
</dbReference>
<dbReference type="DNASU" id="10454"/>
<dbReference type="Ensembl" id="ENST00000216160.11">
    <molecule id="Q15750-1"/>
    <property type="protein sequence ID" value="ENSP00000216160.6"/>
    <property type="gene ID" value="ENSG00000100324.14"/>
</dbReference>
<dbReference type="Ensembl" id="ENST00000331454.3">
    <molecule id="Q15750-2"/>
    <property type="protein sequence ID" value="ENSP00000333049.3"/>
    <property type="gene ID" value="ENSG00000100324.14"/>
</dbReference>
<dbReference type="GeneID" id="10454"/>
<dbReference type="KEGG" id="hsa:10454"/>
<dbReference type="MANE-Select" id="ENST00000216160.11">
    <property type="protein sequence ID" value="ENSP00000216160.6"/>
    <property type="RefSeq nucleotide sequence ID" value="NM_006116.3"/>
    <property type="RefSeq protein sequence ID" value="NP_006107.1"/>
</dbReference>
<dbReference type="UCSC" id="uc003axt.4">
    <molecule id="Q15750-1"/>
    <property type="organism name" value="human"/>
</dbReference>
<dbReference type="AGR" id="HGNC:18157"/>
<dbReference type="CTD" id="10454"/>
<dbReference type="DisGeNET" id="10454"/>
<dbReference type="GeneCards" id="TAB1"/>
<dbReference type="HGNC" id="HGNC:18157">
    <property type="gene designation" value="TAB1"/>
</dbReference>
<dbReference type="HPA" id="ENSG00000100324">
    <property type="expression patterns" value="Low tissue specificity"/>
</dbReference>
<dbReference type="MIM" id="602615">
    <property type="type" value="gene"/>
</dbReference>
<dbReference type="neXtProt" id="NX_Q15750"/>
<dbReference type="OpenTargets" id="ENSG00000100324"/>
<dbReference type="PharmGKB" id="PA30604"/>
<dbReference type="VEuPathDB" id="HostDB:ENSG00000100324"/>
<dbReference type="eggNOG" id="KOG0698">
    <property type="taxonomic scope" value="Eukaryota"/>
</dbReference>
<dbReference type="GeneTree" id="ENSGT00510000048276"/>
<dbReference type="HOGENOM" id="CLU_027717_1_0_1"/>
<dbReference type="InParanoid" id="Q15750"/>
<dbReference type="OMA" id="HPFEDRS"/>
<dbReference type="OrthoDB" id="10049211at2759"/>
<dbReference type="PAN-GO" id="Q15750">
    <property type="GO annotations" value="2 GO annotations based on evolutionary models"/>
</dbReference>
<dbReference type="PhylomeDB" id="Q15750"/>
<dbReference type="TreeFam" id="TF317785"/>
<dbReference type="PathwayCommons" id="Q15750"/>
<dbReference type="Reactome" id="R-HSA-168638">
    <property type="pathway name" value="NOD1/2 Signaling Pathway"/>
</dbReference>
<dbReference type="Reactome" id="R-HSA-2871837">
    <property type="pathway name" value="FCERI mediated NF-kB activation"/>
</dbReference>
<dbReference type="Reactome" id="R-HSA-445989">
    <property type="pathway name" value="TAK1-dependent IKK and NF-kappa-B activation"/>
</dbReference>
<dbReference type="Reactome" id="R-HSA-450302">
    <property type="pathway name" value="activated TAK1 mediates p38 MAPK activation"/>
</dbReference>
<dbReference type="Reactome" id="R-HSA-450321">
    <property type="pathway name" value="JNK (c-Jun kinases) phosphorylation and activation mediated by activated human TAK1"/>
</dbReference>
<dbReference type="Reactome" id="R-HSA-5357956">
    <property type="pathway name" value="TNFR1-induced NF-kappa-B signaling pathway"/>
</dbReference>
<dbReference type="Reactome" id="R-HSA-5607764">
    <property type="pathway name" value="CLEC7A (Dectin-1) signaling"/>
</dbReference>
<dbReference type="Reactome" id="R-HSA-5689880">
    <property type="pathway name" value="Ub-specific processing proteases"/>
</dbReference>
<dbReference type="Reactome" id="R-HSA-9014325">
    <property type="pathway name" value="TICAM1,TRAF6-dependent induction of TAK1 complex"/>
</dbReference>
<dbReference type="Reactome" id="R-HSA-9020702">
    <property type="pathway name" value="Interleukin-1 signaling"/>
</dbReference>
<dbReference type="Reactome" id="R-HSA-937042">
    <property type="pathway name" value="IRAK2 mediated activation of TAK1 complex"/>
</dbReference>
<dbReference type="Reactome" id="R-HSA-937072">
    <property type="pathway name" value="TRAF6-mediated induction of TAK1 complex within TLR4 complex"/>
</dbReference>
<dbReference type="Reactome" id="R-HSA-9645460">
    <property type="pathway name" value="Alpha-protein kinase 1 signaling pathway"/>
</dbReference>
<dbReference type="Reactome" id="R-HSA-9705671">
    <property type="pathway name" value="SARS-CoV-2 activates/modulates innate and adaptive immune responses"/>
</dbReference>
<dbReference type="Reactome" id="R-HSA-975163">
    <property type="pathway name" value="IRAK2 mediated activation of TAK1 complex upon TLR7/8 or 9 stimulation"/>
</dbReference>
<dbReference type="SignaLink" id="Q15750"/>
<dbReference type="SIGNOR" id="Q15750"/>
<dbReference type="BioGRID-ORCS" id="10454">
    <property type="hits" value="28 hits in 1160 CRISPR screens"/>
</dbReference>
<dbReference type="ChiTaRS" id="TAB1">
    <property type="organism name" value="human"/>
</dbReference>
<dbReference type="EvolutionaryTrace" id="Q15750"/>
<dbReference type="GeneWiki" id="MAP3K7IP1"/>
<dbReference type="GenomeRNAi" id="10454"/>
<dbReference type="Pharos" id="Q15750">
    <property type="development level" value="Tchem"/>
</dbReference>
<dbReference type="PRO" id="PR:Q15750"/>
<dbReference type="Proteomes" id="UP000005640">
    <property type="component" value="Chromosome 22"/>
</dbReference>
<dbReference type="RNAct" id="Q15750">
    <property type="molecule type" value="protein"/>
</dbReference>
<dbReference type="Bgee" id="ENSG00000100324">
    <property type="expression patterns" value="Expressed in parotid gland and 152 other cell types or tissues"/>
</dbReference>
<dbReference type="ExpressionAtlas" id="Q15750">
    <property type="expression patterns" value="baseline and differential"/>
</dbReference>
<dbReference type="GO" id="GO:0005737">
    <property type="term" value="C:cytoplasm"/>
    <property type="evidence" value="ECO:0000314"/>
    <property type="project" value="UniProt"/>
</dbReference>
<dbReference type="GO" id="GO:0005829">
    <property type="term" value="C:cytosol"/>
    <property type="evidence" value="ECO:0000318"/>
    <property type="project" value="GO_Central"/>
</dbReference>
<dbReference type="GO" id="GO:0005783">
    <property type="term" value="C:endoplasmic reticulum"/>
    <property type="evidence" value="ECO:0000314"/>
    <property type="project" value="UniProtKB"/>
</dbReference>
<dbReference type="GO" id="GO:0005789">
    <property type="term" value="C:endoplasmic reticulum membrane"/>
    <property type="evidence" value="ECO:0000314"/>
    <property type="project" value="UniProt"/>
</dbReference>
<dbReference type="GO" id="GO:0010008">
    <property type="term" value="C:endosome membrane"/>
    <property type="evidence" value="ECO:0000304"/>
    <property type="project" value="Reactome"/>
</dbReference>
<dbReference type="GO" id="GO:0032991">
    <property type="term" value="C:protein-containing complex"/>
    <property type="evidence" value="ECO:0007669"/>
    <property type="project" value="Ensembl"/>
</dbReference>
<dbReference type="GO" id="GO:0048273">
    <property type="term" value="F:mitogen-activated protein kinase p38 binding"/>
    <property type="evidence" value="ECO:0007669"/>
    <property type="project" value="Ensembl"/>
</dbReference>
<dbReference type="GO" id="GO:0060090">
    <property type="term" value="F:molecular adaptor activity"/>
    <property type="evidence" value="ECO:0000314"/>
    <property type="project" value="UniProt"/>
</dbReference>
<dbReference type="GO" id="GO:0043539">
    <property type="term" value="F:protein serine/threonine kinase activator activity"/>
    <property type="evidence" value="ECO:0000314"/>
    <property type="project" value="UniProtKB"/>
</dbReference>
<dbReference type="GO" id="GO:0004722">
    <property type="term" value="F:protein serine/threonine phosphatase activity"/>
    <property type="evidence" value="ECO:0007669"/>
    <property type="project" value="InterPro"/>
</dbReference>
<dbReference type="GO" id="GO:0044877">
    <property type="term" value="F:protein-containing complex binding"/>
    <property type="evidence" value="ECO:0007669"/>
    <property type="project" value="Ensembl"/>
</dbReference>
<dbReference type="GO" id="GO:0035904">
    <property type="term" value="P:aorta development"/>
    <property type="evidence" value="ECO:0007669"/>
    <property type="project" value="Ensembl"/>
</dbReference>
<dbReference type="GO" id="GO:0003279">
    <property type="term" value="P:cardiac septum development"/>
    <property type="evidence" value="ECO:0007669"/>
    <property type="project" value="Ensembl"/>
</dbReference>
<dbReference type="GO" id="GO:0060976">
    <property type="term" value="P:coronary vasculature development"/>
    <property type="evidence" value="ECO:0007669"/>
    <property type="project" value="Ensembl"/>
</dbReference>
<dbReference type="GO" id="GO:0003007">
    <property type="term" value="P:heart morphogenesis"/>
    <property type="evidence" value="ECO:0007669"/>
    <property type="project" value="Ensembl"/>
</dbReference>
<dbReference type="GO" id="GO:0001701">
    <property type="term" value="P:in utero embryonic development"/>
    <property type="evidence" value="ECO:0007669"/>
    <property type="project" value="Ensembl"/>
</dbReference>
<dbReference type="GO" id="GO:0030324">
    <property type="term" value="P:lung development"/>
    <property type="evidence" value="ECO:0007669"/>
    <property type="project" value="Ensembl"/>
</dbReference>
<dbReference type="GO" id="GO:0038061">
    <property type="term" value="P:non-canonical NF-kappaB signal transduction"/>
    <property type="evidence" value="ECO:0000314"/>
    <property type="project" value="UniProt"/>
</dbReference>
<dbReference type="GO" id="GO:0141111">
    <property type="term" value="P:positive regulation of cGAS/STING signaling pathway"/>
    <property type="evidence" value="ECO:0000314"/>
    <property type="project" value="UniProt"/>
</dbReference>
<dbReference type="GO" id="GO:0043410">
    <property type="term" value="P:positive regulation of MAPK cascade"/>
    <property type="evidence" value="ECO:0007669"/>
    <property type="project" value="Ensembl"/>
</dbReference>
<dbReference type="GO" id="GO:0007165">
    <property type="term" value="P:signal transduction"/>
    <property type="evidence" value="ECO:0000318"/>
    <property type="project" value="GO_Central"/>
</dbReference>
<dbReference type="GO" id="GO:0007179">
    <property type="term" value="P:transforming growth factor beta receptor signaling pathway"/>
    <property type="evidence" value="ECO:0007669"/>
    <property type="project" value="Ensembl"/>
</dbReference>
<dbReference type="CDD" id="cd00143">
    <property type="entry name" value="PP2Cc"/>
    <property type="match status" value="1"/>
</dbReference>
<dbReference type="FunFam" id="3.60.40.10:FF:000014">
    <property type="entry name" value="TGF-beta-activated kinase 1 and MAP3K7-binding protein 1-like"/>
    <property type="match status" value="1"/>
</dbReference>
<dbReference type="Gene3D" id="3.60.40.10">
    <property type="entry name" value="PPM-type phosphatase domain"/>
    <property type="match status" value="1"/>
</dbReference>
<dbReference type="InterPro" id="IPR015655">
    <property type="entry name" value="PP2C"/>
</dbReference>
<dbReference type="InterPro" id="IPR036457">
    <property type="entry name" value="PPM-type-like_dom_sf"/>
</dbReference>
<dbReference type="InterPro" id="IPR001932">
    <property type="entry name" value="PPM-type_phosphatase-like_dom"/>
</dbReference>
<dbReference type="PANTHER" id="PTHR13832">
    <property type="entry name" value="PROTEIN PHOSPHATASE 2C"/>
    <property type="match status" value="1"/>
</dbReference>
<dbReference type="PANTHER" id="PTHR13832:SF533">
    <property type="entry name" value="TGF-BETA-ACTIVATED KINASE 1 AND MAP3K7-BINDING PROTEIN 1"/>
    <property type="match status" value="1"/>
</dbReference>
<dbReference type="Pfam" id="PF00481">
    <property type="entry name" value="PP2C"/>
    <property type="match status" value="1"/>
</dbReference>
<dbReference type="SMART" id="SM00332">
    <property type="entry name" value="PP2Cc"/>
    <property type="match status" value="1"/>
</dbReference>
<dbReference type="SUPFAM" id="SSF81606">
    <property type="entry name" value="PP2C-like"/>
    <property type="match status" value="1"/>
</dbReference>
<dbReference type="PROSITE" id="PS51746">
    <property type="entry name" value="PPM_2"/>
    <property type="match status" value="1"/>
</dbReference>
<gene>
    <name type="primary">TAB1</name>
    <name type="synonym">MAP3K7IP1</name>
</gene>
<proteinExistence type="evidence at protein level"/>
<protein>
    <recommendedName>
        <fullName>TGF-beta-activated kinase 1 and MAP3K7-binding protein 1</fullName>
    </recommendedName>
    <alternativeName>
        <fullName>Mitogen-activated protein kinase kinase kinase 7-interacting protein 1</fullName>
    </alternativeName>
    <alternativeName>
        <fullName>TGF-beta-activated kinase 1-binding protein 1</fullName>
        <shortName>TAK1-binding protein 1</shortName>
    </alternativeName>
</protein>
<accession>Q15750</accession>
<accession>Q2PP09</accession>
<accession>Q8IZW2</accession>
<name>TAB1_HUMAN</name>
<organism>
    <name type="scientific">Homo sapiens</name>
    <name type="common">Human</name>
    <dbReference type="NCBI Taxonomy" id="9606"/>
    <lineage>
        <taxon>Eukaryota</taxon>
        <taxon>Metazoa</taxon>
        <taxon>Chordata</taxon>
        <taxon>Craniata</taxon>
        <taxon>Vertebrata</taxon>
        <taxon>Euteleostomi</taxon>
        <taxon>Mammalia</taxon>
        <taxon>Eutheria</taxon>
        <taxon>Euarchontoglires</taxon>
        <taxon>Primates</taxon>
        <taxon>Haplorrhini</taxon>
        <taxon>Catarrhini</taxon>
        <taxon>Hominidae</taxon>
        <taxon>Homo</taxon>
    </lineage>
</organism>
<keyword id="KW-0002">3D-structure</keyword>
<keyword id="KW-0025">Alternative splicing</keyword>
<keyword id="KW-0963">Cytoplasm</keyword>
<keyword id="KW-0256">Endoplasmic reticulum</keyword>
<keyword id="KW-0325">Glycoprotein</keyword>
<keyword id="KW-0472">Membrane</keyword>
<keyword id="KW-0597">Phosphoprotein</keyword>
<keyword id="KW-1267">Proteomics identification</keyword>
<keyword id="KW-1185">Reference proteome</keyword>
<keyword id="KW-0832">Ubl conjugation</keyword>
<evidence type="ECO:0000250" key="1">
    <source>
        <dbReference type="UniProtKB" id="Q8CF89"/>
    </source>
</evidence>
<evidence type="ECO:0000255" key="2">
    <source>
        <dbReference type="PROSITE-ProRule" id="PRU01082"/>
    </source>
</evidence>
<evidence type="ECO:0000256" key="3">
    <source>
        <dbReference type="SAM" id="MobiDB-lite"/>
    </source>
</evidence>
<evidence type="ECO:0000269" key="4">
    <source>
    </source>
</evidence>
<evidence type="ECO:0000269" key="5">
    <source>
    </source>
</evidence>
<evidence type="ECO:0000269" key="6">
    <source>
    </source>
</evidence>
<evidence type="ECO:0000269" key="7">
    <source>
    </source>
</evidence>
<evidence type="ECO:0000269" key="8">
    <source>
    </source>
</evidence>
<evidence type="ECO:0000269" key="9">
    <source>
    </source>
</evidence>
<evidence type="ECO:0000269" key="10">
    <source>
    </source>
</evidence>
<evidence type="ECO:0000269" key="11">
    <source>
    </source>
</evidence>
<evidence type="ECO:0000269" key="12">
    <source>
    </source>
</evidence>
<evidence type="ECO:0000269" key="13">
    <source>
    </source>
</evidence>
<evidence type="ECO:0000269" key="14">
    <source>
    </source>
</evidence>
<evidence type="ECO:0000269" key="15">
    <source>
    </source>
</evidence>
<evidence type="ECO:0000269" key="16">
    <source>
    </source>
</evidence>
<evidence type="ECO:0000269" key="17">
    <source>
    </source>
</evidence>
<evidence type="ECO:0000269" key="18">
    <source>
    </source>
</evidence>
<evidence type="ECO:0000269" key="19">
    <source>
    </source>
</evidence>
<evidence type="ECO:0000269" key="20">
    <source>
    </source>
</evidence>
<evidence type="ECO:0000269" key="21">
    <source>
    </source>
</evidence>
<evidence type="ECO:0000269" key="22">
    <source>
    </source>
</evidence>
<evidence type="ECO:0000303" key="23">
    <source>
    </source>
</evidence>
<evidence type="ECO:0000303" key="24">
    <source>
    </source>
</evidence>
<evidence type="ECO:0000305" key="25"/>
<evidence type="ECO:0007744" key="26">
    <source>
        <dbReference type="PDB" id="5O90"/>
    </source>
</evidence>
<evidence type="ECO:0007744" key="27">
    <source>
        <dbReference type="PDB" id="5VVU"/>
    </source>
</evidence>
<evidence type="ECO:0007744" key="28">
    <source>
    </source>
</evidence>
<evidence type="ECO:0007744" key="29">
    <source>
    </source>
</evidence>
<evidence type="ECO:0007744" key="30">
    <source>
    </source>
</evidence>
<evidence type="ECO:0007744" key="31">
    <source>
    </source>
</evidence>
<evidence type="ECO:0007744" key="32">
    <source>
    </source>
</evidence>
<evidence type="ECO:0007829" key="33">
    <source>
        <dbReference type="PDB" id="2J4O"/>
    </source>
</evidence>
<evidence type="ECO:0007829" key="34">
    <source>
        <dbReference type="PDB" id="2POM"/>
    </source>
</evidence>
<evidence type="ECO:0007829" key="35">
    <source>
        <dbReference type="PDB" id="2POP"/>
    </source>
</evidence>
<evidence type="ECO:0007829" key="36">
    <source>
        <dbReference type="PDB" id="5NZZ"/>
    </source>
</evidence>
<evidence type="ECO:0007829" key="37">
    <source>
        <dbReference type="PDB" id="7NTH"/>
    </source>
</evidence>
<sequence length="504" mass="54644">MAAQRRSLLQSEQQPSWTDDLPLCHLSGVGSASNRSYSADGKGTESHPPEDSWLKFRSENNCFLYGVFNGYDGNRVTNFVAQRLSAELLLGQLNAEHAEADVRRVLLQAFDVVERSFLESIDDALAEKASLQSQLPEGVPQHQLPPQYQKILERLKTLEREISGGAMAVVAVLLNNKLYVANVGTNRALLCKSTVDGLQVTQLNVDHTTENEDELFRLSQLGLDAGKIKQVGIICGQESTRRIGDYKVKYGYTDIDLLSAAKSKPIIAEPEIHGAQPLDGVTGFLVLMSEGLYKALEAAHGPGQANQEIAAMIDTEFAKQTSLDAVAQAVVDRVKRIHSDTFASGGERARFCPRHEDMTLLVRNFGYPLGEMSQPTPSPAPAAGGRVYPVSVPYSSAQSTSKTSVTLSLVMPSQGQMVNGAHSASTLDEATPTLTNQSPTLTLQSTNTHTQSSSSSSDGGLFRSRPAHSLPPGEDGRVEPYVDFAEFYRLWSVDHGEQSVVTAP</sequence>
<reference key="1">
    <citation type="journal article" date="1996" name="Science">
        <title>TAB1: an activator of the TAK1 MAPKKK in TGF-beta signal transduction.</title>
        <authorList>
            <person name="Shibuya H."/>
            <person name="Yamaguchi K."/>
            <person name="Shirakabe K."/>
            <person name="Tonegawa A."/>
            <person name="Gotoh Y."/>
            <person name="Ueno N."/>
            <person name="Irie K."/>
            <person name="Nishida E."/>
            <person name="Matsumoto K."/>
        </authorList>
    </citation>
    <scope>NUCLEOTIDE SEQUENCE [MRNA] (ISOFORM 1)</scope>
    <scope>INTERACTION WITH MAP3K7</scope>
    <source>
        <tissue>Brain</tissue>
    </source>
</reference>
<reference key="2">
    <citation type="journal article" date="2003" name="J. Biol. Chem.">
        <title>TAB1beta (transforming growth factor-beta-activated protein kinase 1-binding protein 1beta), a novel splicing variant of TAB1 that interacts with p38alpha but not TAK1.</title>
        <authorList>
            <person name="Ge B."/>
            <person name="Xiong X."/>
            <person name="Jing Q."/>
            <person name="Mosley J.L."/>
            <person name="Filose A."/>
            <person name="Bian D."/>
            <person name="Huang S."/>
            <person name="Han J."/>
        </authorList>
    </citation>
    <scope>NUCLEOTIDE SEQUENCE [MRNA] (ISOFORM 2)</scope>
    <scope>TISSUE SPECIFICITY</scope>
    <scope>ALTERNATIVE SPLICING</scope>
</reference>
<reference key="3">
    <citation type="submission" date="2005-12" db="EMBL/GenBank/DDBJ databases">
        <authorList>
            <consortium name="NHLBI resequencing and genotyping service (RS&amp;G)"/>
        </authorList>
    </citation>
    <scope>NUCLEOTIDE SEQUENCE [GENOMIC DNA]</scope>
</reference>
<reference key="4">
    <citation type="journal article" date="1999" name="Nature">
        <title>The DNA sequence of human chromosome 22.</title>
        <authorList>
            <person name="Dunham I."/>
            <person name="Hunt A.R."/>
            <person name="Collins J.E."/>
            <person name="Bruskiewich R."/>
            <person name="Beare D.M."/>
            <person name="Clamp M."/>
            <person name="Smink L.J."/>
            <person name="Ainscough R."/>
            <person name="Almeida J.P."/>
            <person name="Babbage A.K."/>
            <person name="Bagguley C."/>
            <person name="Bailey J."/>
            <person name="Barlow K.F."/>
            <person name="Bates K.N."/>
            <person name="Beasley O.P."/>
            <person name="Bird C.P."/>
            <person name="Blakey S.E."/>
            <person name="Bridgeman A.M."/>
            <person name="Buck D."/>
            <person name="Burgess J."/>
            <person name="Burrill W.D."/>
            <person name="Burton J."/>
            <person name="Carder C."/>
            <person name="Carter N.P."/>
            <person name="Chen Y."/>
            <person name="Clark G."/>
            <person name="Clegg S.M."/>
            <person name="Cobley V.E."/>
            <person name="Cole C.G."/>
            <person name="Collier R.E."/>
            <person name="Connor R."/>
            <person name="Conroy D."/>
            <person name="Corby N.R."/>
            <person name="Coville G.J."/>
            <person name="Cox A.V."/>
            <person name="Davis J."/>
            <person name="Dawson E."/>
            <person name="Dhami P.D."/>
            <person name="Dockree C."/>
            <person name="Dodsworth S.J."/>
            <person name="Durbin R.M."/>
            <person name="Ellington A.G."/>
            <person name="Evans K.L."/>
            <person name="Fey J.M."/>
            <person name="Fleming K."/>
            <person name="French L."/>
            <person name="Garner A.A."/>
            <person name="Gilbert J.G.R."/>
            <person name="Goward M.E."/>
            <person name="Grafham D.V."/>
            <person name="Griffiths M.N.D."/>
            <person name="Hall C."/>
            <person name="Hall R.E."/>
            <person name="Hall-Tamlyn G."/>
            <person name="Heathcott R.W."/>
            <person name="Ho S."/>
            <person name="Holmes S."/>
            <person name="Hunt S.E."/>
            <person name="Jones M.C."/>
            <person name="Kershaw J."/>
            <person name="Kimberley A.M."/>
            <person name="King A."/>
            <person name="Laird G.K."/>
            <person name="Langford C.F."/>
            <person name="Leversha M.A."/>
            <person name="Lloyd C."/>
            <person name="Lloyd D.M."/>
            <person name="Martyn I.D."/>
            <person name="Mashreghi-Mohammadi M."/>
            <person name="Matthews L.H."/>
            <person name="Mccann O.T."/>
            <person name="Mcclay J."/>
            <person name="Mclaren S."/>
            <person name="McMurray A.A."/>
            <person name="Milne S.A."/>
            <person name="Mortimore B.J."/>
            <person name="Odell C.N."/>
            <person name="Pavitt R."/>
            <person name="Pearce A.V."/>
            <person name="Pearson D."/>
            <person name="Phillimore B.J.C.T."/>
            <person name="Phillips S.H."/>
            <person name="Plumb R.W."/>
            <person name="Ramsay H."/>
            <person name="Ramsey Y."/>
            <person name="Rogers L."/>
            <person name="Ross M.T."/>
            <person name="Scott C.E."/>
            <person name="Sehra H.K."/>
            <person name="Skuce C.D."/>
            <person name="Smalley S."/>
            <person name="Smith M.L."/>
            <person name="Soderlund C."/>
            <person name="Spragon L."/>
            <person name="Steward C.A."/>
            <person name="Sulston J.E."/>
            <person name="Swann R.M."/>
            <person name="Vaudin M."/>
            <person name="Wall M."/>
            <person name="Wallis J.M."/>
            <person name="Whiteley M.N."/>
            <person name="Willey D.L."/>
            <person name="Williams L."/>
            <person name="Williams S.A."/>
            <person name="Williamson H."/>
            <person name="Wilmer T.E."/>
            <person name="Wilming L."/>
            <person name="Wright C.L."/>
            <person name="Hubbard T."/>
            <person name="Bentley D.R."/>
            <person name="Beck S."/>
            <person name="Rogers J."/>
            <person name="Shimizu N."/>
            <person name="Minoshima S."/>
            <person name="Kawasaki K."/>
            <person name="Sasaki T."/>
            <person name="Asakawa S."/>
            <person name="Kudoh J."/>
            <person name="Shintani A."/>
            <person name="Shibuya K."/>
            <person name="Yoshizaki Y."/>
            <person name="Aoki N."/>
            <person name="Mitsuyama S."/>
            <person name="Roe B.A."/>
            <person name="Chen F."/>
            <person name="Chu L."/>
            <person name="Crabtree J."/>
            <person name="Deschamps S."/>
            <person name="Do A."/>
            <person name="Do T."/>
            <person name="Dorman A."/>
            <person name="Fang F."/>
            <person name="Fu Y."/>
            <person name="Hu P."/>
            <person name="Hua A."/>
            <person name="Kenton S."/>
            <person name="Lai H."/>
            <person name="Lao H.I."/>
            <person name="Lewis J."/>
            <person name="Lewis S."/>
            <person name="Lin S.-P."/>
            <person name="Loh P."/>
            <person name="Malaj E."/>
            <person name="Nguyen T."/>
            <person name="Pan H."/>
            <person name="Phan S."/>
            <person name="Qi S."/>
            <person name="Qian Y."/>
            <person name="Ray L."/>
            <person name="Ren Q."/>
            <person name="Shaull S."/>
            <person name="Sloan D."/>
            <person name="Song L."/>
            <person name="Wang Q."/>
            <person name="Wang Y."/>
            <person name="Wang Z."/>
            <person name="White J."/>
            <person name="Willingham D."/>
            <person name="Wu H."/>
            <person name="Yao Z."/>
            <person name="Zhan M."/>
            <person name="Zhang G."/>
            <person name="Chissoe S."/>
            <person name="Murray J."/>
            <person name="Miller N."/>
            <person name="Minx P."/>
            <person name="Fulton R."/>
            <person name="Johnson D."/>
            <person name="Bemis G."/>
            <person name="Bentley D."/>
            <person name="Bradshaw H."/>
            <person name="Bourne S."/>
            <person name="Cordes M."/>
            <person name="Du Z."/>
            <person name="Fulton L."/>
            <person name="Goela D."/>
            <person name="Graves T."/>
            <person name="Hawkins J."/>
            <person name="Hinds K."/>
            <person name="Kemp K."/>
            <person name="Latreille P."/>
            <person name="Layman D."/>
            <person name="Ozersky P."/>
            <person name="Rohlfing T."/>
            <person name="Scheet P."/>
            <person name="Walker C."/>
            <person name="Wamsley A."/>
            <person name="Wohldmann P."/>
            <person name="Pepin K."/>
            <person name="Nelson J."/>
            <person name="Korf I."/>
            <person name="Bedell J.A."/>
            <person name="Hillier L.W."/>
            <person name="Mardis E."/>
            <person name="Waterston R."/>
            <person name="Wilson R."/>
            <person name="Emanuel B.S."/>
            <person name="Shaikh T."/>
            <person name="Kurahashi H."/>
            <person name="Saitta S."/>
            <person name="Budarf M.L."/>
            <person name="McDermid H.E."/>
            <person name="Johnson A."/>
            <person name="Wong A.C.C."/>
            <person name="Morrow B.E."/>
            <person name="Edelmann L."/>
            <person name="Kim U.J."/>
            <person name="Shizuya H."/>
            <person name="Simon M.I."/>
            <person name="Dumanski J.P."/>
            <person name="Peyrard M."/>
            <person name="Kedra D."/>
            <person name="Seroussi E."/>
            <person name="Fransson I."/>
            <person name="Tapia I."/>
            <person name="Bruder C.E."/>
            <person name="O'Brien K.P."/>
            <person name="Wilkinson P."/>
            <person name="Bodenteich A."/>
            <person name="Hartman K."/>
            <person name="Hu X."/>
            <person name="Khan A.S."/>
            <person name="Lane L."/>
            <person name="Tilahun Y."/>
            <person name="Wright H."/>
        </authorList>
    </citation>
    <scope>NUCLEOTIDE SEQUENCE [LARGE SCALE GENOMIC DNA]</scope>
</reference>
<reference key="5">
    <citation type="submission" date="2005-07" db="EMBL/GenBank/DDBJ databases">
        <authorList>
            <person name="Mural R.J."/>
            <person name="Istrail S."/>
            <person name="Sutton G."/>
            <person name="Florea L."/>
            <person name="Halpern A.L."/>
            <person name="Mobarry C.M."/>
            <person name="Lippert R."/>
            <person name="Walenz B."/>
            <person name="Shatkay H."/>
            <person name="Dew I."/>
            <person name="Miller J.R."/>
            <person name="Flanigan M.J."/>
            <person name="Edwards N.J."/>
            <person name="Bolanos R."/>
            <person name="Fasulo D."/>
            <person name="Halldorsson B.V."/>
            <person name="Hannenhalli S."/>
            <person name="Turner R."/>
            <person name="Yooseph S."/>
            <person name="Lu F."/>
            <person name="Nusskern D.R."/>
            <person name="Shue B.C."/>
            <person name="Zheng X.H."/>
            <person name="Zhong F."/>
            <person name="Delcher A.L."/>
            <person name="Huson D.H."/>
            <person name="Kravitz S.A."/>
            <person name="Mouchard L."/>
            <person name="Reinert K."/>
            <person name="Remington K.A."/>
            <person name="Clark A.G."/>
            <person name="Waterman M.S."/>
            <person name="Eichler E.E."/>
            <person name="Adams M.D."/>
            <person name="Hunkapiller M.W."/>
            <person name="Myers E.W."/>
            <person name="Venter J.C."/>
        </authorList>
    </citation>
    <scope>NUCLEOTIDE SEQUENCE [LARGE SCALE GENOMIC DNA]</scope>
</reference>
<reference key="6">
    <citation type="journal article" date="2004" name="Genome Res.">
        <title>The status, quality, and expansion of the NIH full-length cDNA project: the Mammalian Gene Collection (MGC).</title>
        <authorList>
            <consortium name="The MGC Project Team"/>
        </authorList>
    </citation>
    <scope>NUCLEOTIDE SEQUENCE [LARGE SCALE MRNA] (ISOFORM 1)</scope>
    <source>
        <tissue>PNS</tissue>
    </source>
</reference>
<reference key="7">
    <citation type="journal article" date="1999" name="Nature">
        <title>The kinase TAK1 can activate the NIK-I kappaB as well as the MAP kinase cascade in the IL-1 signalling pathway.</title>
        <authorList>
            <person name="Ninomiya-Tsuji J."/>
            <person name="Kishimoto K."/>
            <person name="Hiyama A."/>
            <person name="Inoue J."/>
            <person name="Cao Z."/>
            <person name="Matsumoto K."/>
        </authorList>
    </citation>
    <scope>INTERACTION WITH TRAF6 AND MAP3K7</scope>
</reference>
<reference key="8">
    <citation type="journal article" date="2000" name="FEBS Lett.">
        <title>Phosphorylation-dependent activation of TAK1 mitogen-activated protein kinase kinase kinase by TAB1.</title>
        <authorList>
            <person name="Sakurai H."/>
            <person name="Miyoshi H."/>
            <person name="Mizukami J."/>
            <person name="Sugita T."/>
        </authorList>
    </citation>
    <scope>FUNCTION</scope>
    <scope>INTERACTION WITH MAP3K7</scope>
</reference>
<reference key="9">
    <citation type="journal article" date="2001" name="J. Biol. Chem.">
        <title>An evolutionarily conserved motif in the TAB1 C-terminal region is necessary for interaction with and activation of TAK1 MAPKKK.</title>
        <authorList>
            <person name="Ono K."/>
            <person name="Ohtomo T."/>
            <person name="Sato S."/>
            <person name="Sugamata Y."/>
            <person name="Suzuki M."/>
            <person name="Hisamoto N."/>
            <person name="Ninomiya-Tsuji J."/>
            <person name="Tsuchiya M."/>
            <person name="Matsumoto K."/>
        </authorList>
    </citation>
    <scope>INTERACTION WITH MAP3K7</scope>
    <scope>MUTAGENESIS OF PHE-484</scope>
</reference>
<reference key="10">
    <citation type="journal article" date="2001" name="Nature">
        <title>TAK1 is a ubiquitin-dependent kinase of MKK and IKK.</title>
        <authorList>
            <person name="Wang C."/>
            <person name="Deng L."/>
            <person name="Hong M."/>
            <person name="Akkaraju G.R."/>
            <person name="Inoue J."/>
            <person name="Chen Z.J."/>
        </authorList>
    </citation>
    <scope>SUBUNIT</scope>
    <scope>IDENTIFICATION IN THE TRIKA2 COMPLEX</scope>
</reference>
<reference key="11">
    <citation type="journal article" date="2002" name="Mol. Cell. Biol.">
        <title>IAP suppression of apoptosis involves distinct mechanisms: the TAK1/JNK1 signaling cascade and caspase inhibition.</title>
        <authorList>
            <person name="Sanna M.G."/>
            <person name="da Silva Correia J."/>
            <person name="Ducrey O."/>
            <person name="Lee J."/>
            <person name="Nomoto K."/>
            <person name="Schrantz N."/>
            <person name="Deveraux Q.L."/>
            <person name="Ulevitch R.J."/>
        </authorList>
    </citation>
    <scope>INTERACTION WITH XIAP AND BIRC7</scope>
</reference>
<reference key="12">
    <citation type="journal article" date="2002" name="Science">
        <title>MAPKK-independent activation of p38alpha mediated by TAB1-dependent autophosphorylation of p38alpha.</title>
        <authorList>
            <person name="Ge B."/>
            <person name="Gram H."/>
            <person name="Di Padova F."/>
            <person name="Huang B."/>
            <person name="New L."/>
            <person name="Ulevitch R.J."/>
            <person name="Luo Y."/>
            <person name="Han J."/>
        </authorList>
    </citation>
    <scope>FUNCTION</scope>
    <scope>INTERACTION WITH TRAF6 AND MAPK14</scope>
</reference>
<reference key="13">
    <citation type="journal article" date="2003" name="EMBO J.">
        <title>Feedback control of the protein kinase TAK1 by SAPK2a/p38alpha.</title>
        <authorList>
            <person name="Cheung P.C."/>
            <person name="Campbell D.G."/>
            <person name="Nebreda A.R."/>
            <person name="Cohen P."/>
        </authorList>
    </citation>
    <scope>PHOSPHORYLATION AT SER-423; THR-431 AND SER-438</scope>
    <scope>FUNCTION</scope>
</reference>
<reference key="14">
    <citation type="journal article" date="2006" name="EMBO Rep.">
        <title>The Yersinia enterocolitica effector YopP inhibits host cell signalling by inactivating the protein kinase TAK1 in the IL-1 signalling pathway.</title>
        <authorList>
            <person name="Thiefes A."/>
            <person name="Wolf A."/>
            <person name="Doerrie A."/>
            <person name="Grassl G.A."/>
            <person name="Matsumoto K."/>
            <person name="Autenrieth I."/>
            <person name="Bohn E."/>
            <person name="Sakurai H."/>
            <person name="Niedenthal R."/>
            <person name="Resch K."/>
            <person name="Kracht M."/>
        </authorList>
    </citation>
    <scope>UBIQUITINATION</scope>
    <scope>PHOSPHORYLATION AT SER-438</scope>
    <scope>MUTAGENESIS OF SER-438</scope>
    <scope>DEUBIQUITINATION BY Y.ENTEROCOLITICA YOPP (MICROBIAL INFECTION)</scope>
</reference>
<reference key="15">
    <citation type="journal article" date="2008" name="J. Proteome Res.">
        <title>Combining protein-based IMAC, peptide-based IMAC, and MudPIT for efficient phosphoproteomic analysis.</title>
        <authorList>
            <person name="Cantin G.T."/>
            <person name="Yi W."/>
            <person name="Lu B."/>
            <person name="Park S.K."/>
            <person name="Xu T."/>
            <person name="Lee J.-D."/>
            <person name="Yates J.R. III"/>
        </authorList>
    </citation>
    <scope>PHOSPHORYLATION [LARGE SCALE ANALYSIS] AT SER-7</scope>
    <scope>IDENTIFICATION BY MASS SPECTROMETRY [LARGE SCALE ANALYSIS]</scope>
    <source>
        <tissue>Cervix carcinoma</tissue>
    </source>
</reference>
<reference key="16">
    <citation type="journal article" date="2008" name="Proc. Natl. Acad. Sci. U.S.A.">
        <title>A quantitative atlas of mitotic phosphorylation.</title>
        <authorList>
            <person name="Dephoure N."/>
            <person name="Zhou C."/>
            <person name="Villen J."/>
            <person name="Beausoleil S.A."/>
            <person name="Bakalarski C.E."/>
            <person name="Elledge S.J."/>
            <person name="Gygi S.P."/>
        </authorList>
    </citation>
    <scope>PHOSPHORYLATION [LARGE SCALE ANALYSIS] AT SER-7</scope>
    <scope>IDENTIFICATION BY MASS SPECTROMETRY [LARGE SCALE ANALYSIS]</scope>
    <source>
        <tissue>Cervix carcinoma</tissue>
    </source>
</reference>
<reference key="17">
    <citation type="journal article" date="2008" name="Biochem. J.">
        <title>Roles for TAB1 in regulating the IL-1-dependent phosphorylation of the TAB3 regulatory subunit and activity of the TAK1 complex.</title>
        <authorList>
            <person name="Mendoza H."/>
            <person name="Campbell D.G."/>
            <person name="Burness K."/>
            <person name="Hastie J."/>
            <person name="Ronkina N."/>
            <person name="Shim J.H."/>
            <person name="Arthur J.S."/>
            <person name="Davis R.J."/>
            <person name="Gaestel M."/>
            <person name="Johnson G.L."/>
            <person name="Ghosh S."/>
            <person name="Cohen P."/>
        </authorList>
    </citation>
    <scope>FUNCTION</scope>
    <scope>PHOSPHORYLATION AT SER-438</scope>
</reference>
<reference key="18">
    <citation type="journal article" date="2009" name="Sci. Signal.">
        <title>Quantitative phosphoproteomic analysis of T cell receptor signaling reveals system-wide modulation of protein-protein interactions.</title>
        <authorList>
            <person name="Mayya V."/>
            <person name="Lundgren D.H."/>
            <person name="Hwang S.-I."/>
            <person name="Rezaul K."/>
            <person name="Wu L."/>
            <person name="Eng J.K."/>
            <person name="Rodionov V."/>
            <person name="Han D.K."/>
        </authorList>
    </citation>
    <scope>PHOSPHORYLATION [LARGE SCALE ANALYSIS] AT SER-378</scope>
    <scope>IDENTIFICATION BY MASS SPECTROMETRY [LARGE SCALE ANALYSIS]</scope>
    <source>
        <tissue>Leukemic T-cell</tissue>
    </source>
</reference>
<reference key="19">
    <citation type="journal article" date="2010" name="Sci. Signal.">
        <title>Quantitative phosphoproteomics reveals widespread full phosphorylation site occupancy during mitosis.</title>
        <authorList>
            <person name="Olsen J.V."/>
            <person name="Vermeulen M."/>
            <person name="Santamaria A."/>
            <person name="Kumar C."/>
            <person name="Miller M.L."/>
            <person name="Jensen L.J."/>
            <person name="Gnad F."/>
            <person name="Cox J."/>
            <person name="Jensen T.S."/>
            <person name="Nigg E.A."/>
            <person name="Brunak S."/>
            <person name="Mann M."/>
        </authorList>
    </citation>
    <scope>IDENTIFICATION BY MASS SPECTROMETRY [LARGE SCALE ANALYSIS]</scope>
    <source>
        <tissue>Cervix carcinoma</tissue>
    </source>
</reference>
<reference key="20">
    <citation type="journal article" date="2011" name="BMC Syst. Biol.">
        <title>Initial characterization of the human central proteome.</title>
        <authorList>
            <person name="Burkard T.R."/>
            <person name="Planyavsky M."/>
            <person name="Kaupe I."/>
            <person name="Breitwieser F.P."/>
            <person name="Buerckstuemmer T."/>
            <person name="Bennett K.L."/>
            <person name="Superti-Furga G."/>
            <person name="Colinge J."/>
        </authorList>
    </citation>
    <scope>IDENTIFICATION BY MASS SPECTROMETRY [LARGE SCALE ANALYSIS]</scope>
</reference>
<reference key="21">
    <citation type="journal article" date="2012" name="EMBO J.">
        <title>O-GlcNAcylation of TAB1 modulates TAK1-mediated cytokine release.</title>
        <authorList>
            <person name="Pathak S."/>
            <person name="Borodkin V.S."/>
            <person name="Albarbarawi O."/>
            <person name="Campbell D.G."/>
            <person name="Ibrahim A."/>
            <person name="van Aalten D.M."/>
        </authorList>
    </citation>
    <scope>FUNCTION</scope>
    <scope>GLYCOSYLATION AT SER-395</scope>
    <scope>MUTAGENESIS OF SER-395</scope>
</reference>
<reference key="22">
    <citation type="journal article" date="2013" name="J. Proteome Res.">
        <title>Toward a comprehensive characterization of a human cancer cell phosphoproteome.</title>
        <authorList>
            <person name="Zhou H."/>
            <person name="Di Palma S."/>
            <person name="Preisinger C."/>
            <person name="Peng M."/>
            <person name="Polat A.N."/>
            <person name="Heck A.J."/>
            <person name="Mohammed S."/>
        </authorList>
    </citation>
    <scope>PHOSPHORYLATION [LARGE SCALE ANALYSIS] AT SER-378</scope>
    <scope>IDENTIFICATION BY MASS SPECTROMETRY [LARGE SCALE ANALYSIS]</scope>
    <source>
        <tissue>Erythroleukemia</tissue>
    </source>
</reference>
<reference key="23">
    <citation type="journal article" date="2014" name="J. Immunol.">
        <title>Dual-specificity phosphatase 14 (DUSP14/MKP6) negatively regulates TCR signaling by inhibiting TAB1 activation.</title>
        <authorList>
            <person name="Yang C.Y."/>
            <person name="Li J.P."/>
            <person name="Chiu L.L."/>
            <person name="Lan J.L."/>
            <person name="Chen D.Y."/>
            <person name="Chuang H.C."/>
            <person name="Huang C.Y."/>
            <person name="Tan T.H."/>
        </authorList>
    </citation>
    <scope>PHOSPHORYLATION AT SER-438</scope>
    <scope>FUNCTION</scope>
</reference>
<reference key="24">
    <citation type="journal article" date="2014" name="EMBO J.">
        <title>The MEKK1 PHD ubiquitinates TAB1 to activate MAPKs in response to cytokines.</title>
        <authorList>
            <person name="Charlaftis N."/>
            <person name="Suddason T."/>
            <person name="Wu X."/>
            <person name="Anwar S."/>
            <person name="Karin M."/>
            <person name="Gallagher E."/>
        </authorList>
    </citation>
    <scope>UBIQUITINATION</scope>
    <scope>FUNCTION</scope>
</reference>
<reference key="25">
    <citation type="journal article" date="2015" name="Sci. Signal.">
        <title>The E3 ubiquitin ligase Itch inhibits p38alpha signaling and skin inflammation through the ubiquitylation of Tab1.</title>
        <authorList>
            <person name="Theivanthiran B."/>
            <person name="Kathania M."/>
            <person name="Zeng M."/>
            <person name="Anguiano E."/>
            <person name="Basrur V."/>
            <person name="Vandergriff T."/>
            <person name="Pascual V."/>
            <person name="Wei W.Z."/>
            <person name="Massoumi R."/>
            <person name="Venuprasad K."/>
        </authorList>
    </citation>
    <scope>UBIQUITINATION</scope>
    <scope>FUNCTION</scope>
    <scope>MUTAGENESIS OF TYR-148</scope>
</reference>
<reference key="26">
    <citation type="journal article" date="2014" name="J. Proteomics">
        <title>An enzyme assisted RP-RPLC approach for in-depth analysis of human liver phosphoproteome.</title>
        <authorList>
            <person name="Bian Y."/>
            <person name="Song C."/>
            <person name="Cheng K."/>
            <person name="Dong M."/>
            <person name="Wang F."/>
            <person name="Huang J."/>
            <person name="Sun D."/>
            <person name="Wang L."/>
            <person name="Ye M."/>
            <person name="Zou H."/>
        </authorList>
    </citation>
    <scope>PHOSPHORYLATION [LARGE SCALE ANALYSIS] AT SER-438 AND THR-442</scope>
    <scope>IDENTIFICATION BY MASS SPECTROMETRY [LARGE SCALE ANALYSIS]</scope>
    <source>
        <tissue>Liver</tissue>
    </source>
</reference>
<reference key="27">
    <citation type="journal article" date="2023" name="Mol. Cell">
        <title>TAK1 is an essential kinase for STING trafficking.</title>
        <authorList>
            <person name="Ma M."/>
            <person name="Dang Y."/>
            <person name="Chang B."/>
            <person name="Wang F."/>
            <person name="Xu J."/>
            <person name="Chen L."/>
            <person name="Su H."/>
            <person name="Li J."/>
            <person name="Ge B."/>
            <person name="Chen C."/>
            <person name="Liu H."/>
        </authorList>
    </citation>
    <scope>FUNCTION</scope>
    <scope>INTERACTION WITH STING1</scope>
    <scope>SUBCELLULAR LOCATION</scope>
</reference>
<reference key="28">
    <citation type="journal article" date="2006" name="Biochem. J.">
        <title>TAK1-binding protein 1 is a pseudophosphatase.</title>
        <authorList>
            <person name="Conner S.H."/>
            <person name="Kular G."/>
            <person name="Peggie M."/>
            <person name="Shepherd S."/>
            <person name="Schuettelkopf A.W."/>
            <person name="Cohen P."/>
            <person name="Van Aalten D.M.F."/>
        </authorList>
    </citation>
    <scope>X-RAY CRYSTALLOGRAPHY (2.25 ANGSTROMS) OF 1-401</scope>
    <scope>LACK OF FUNCTION AS A PHOSPHATASE</scope>
</reference>
<reference key="29">
    <citation type="journal article" date="2007" name="Mol. Cell">
        <title>XIAP induces NF-kappaB activation via the BIR1/TAB1 interaction and BIR1 dimerization.</title>
        <authorList>
            <person name="Lu M."/>
            <person name="Lin S.-C."/>
            <person name="Huang Y."/>
            <person name="Kang Y.J."/>
            <person name="Rich R."/>
            <person name="Lo Y.-C."/>
            <person name="Myszka D."/>
            <person name="Han J."/>
            <person name="Wu H."/>
        </authorList>
    </citation>
    <scope>X-RAY CRYSTALLOGRAPHY (2.27 ANGSTROMS) OF 1-370 IN COMPLEX WITH XIAP</scope>
    <scope>MUTAGENESIS OF ASP-213 AND PHE-216</scope>
</reference>
<reference evidence="27" key="30">
    <citation type="journal article" date="2017" name="Nat. Commun.">
        <title>Structural insights into the substrate binding adaptability and specificity of human O-GlcNAcase.</title>
        <authorList>
            <person name="Li B."/>
            <person name="Li H."/>
            <person name="Hu C.W."/>
            <person name="Jiang J."/>
        </authorList>
    </citation>
    <scope>X-RAY CRYSTALLOGRAPHY (2.70 ANGSTROMS) OF 392-398 IN COMPLEX WITH OGA</scope>
    <scope>GLYCOSYLATION AT SER-395</scope>
    <scope>DEGLYCOSYLATION AT SER-395</scope>
</reference>
<reference evidence="26" key="31">
    <citation type="journal article" date="2018" name="Mol. Cell. Biol.">
        <title>TAB1-Induced Autoactivation of p38alpha Mitogen-Activated Protein Kinase Is Crucially Dependent on Threonine 185.</title>
        <authorList>
            <person name="Thapa D."/>
            <person name="Nichols C."/>
            <person name="Bassi R."/>
            <person name="Martin E.D."/>
            <person name="Verma S."/>
            <person name="Conte M.R."/>
            <person name="De Santis V."/>
            <person name="De Nicola G.F."/>
            <person name="Marber M.S."/>
        </authorList>
    </citation>
    <scope>X-RAY CRYSTALLOGRAPHY (2.49 ANGSTROMS) OF 386-414</scope>
    <scope>FUNCTION</scope>
</reference>
<feature type="chain" id="PRO_0000057797" description="TGF-beta-activated kinase 1 and MAP3K7-binding protein 1">
    <location>
        <begin position="1"/>
        <end position="504"/>
    </location>
</feature>
<feature type="domain" description="PPM-type phosphatase" evidence="2">
    <location>
        <begin position="28"/>
        <end position="365"/>
    </location>
</feature>
<feature type="region of interest" description="Disordered" evidence="3">
    <location>
        <begin position="1"/>
        <end position="22"/>
    </location>
</feature>
<feature type="region of interest" description="Disordered" evidence="3">
    <location>
        <begin position="430"/>
        <end position="478"/>
    </location>
</feature>
<feature type="compositionally biased region" description="Polar residues" evidence="3">
    <location>
        <begin position="7"/>
        <end position="17"/>
    </location>
</feature>
<feature type="compositionally biased region" description="Polar residues" evidence="3">
    <location>
        <begin position="430"/>
        <end position="439"/>
    </location>
</feature>
<feature type="compositionally biased region" description="Low complexity" evidence="3">
    <location>
        <begin position="440"/>
        <end position="457"/>
    </location>
</feature>
<feature type="site" description="Required for interaction with MAP3K7" evidence="6">
    <location>
        <position position="484"/>
    </location>
</feature>
<feature type="modified residue" description="Phosphoserine" evidence="28 29">
    <location>
        <position position="7"/>
    </location>
</feature>
<feature type="modified residue" description="Phosphoserine" evidence="30 31">
    <location>
        <position position="378"/>
    </location>
</feature>
<feature type="modified residue" description="Phosphoserine; by MAPK14" evidence="11">
    <location>
        <position position="423"/>
    </location>
</feature>
<feature type="modified residue" description="Phosphothreonine; by MAPK14" evidence="11">
    <location>
        <position position="431"/>
    </location>
</feature>
<feature type="modified residue" description="Phosphoserine; by MAPK14" evidence="11 12 14 32">
    <location>
        <position position="438"/>
    </location>
</feature>
<feature type="modified residue" description="Phosphothreonine" evidence="32">
    <location>
        <position position="442"/>
    </location>
</feature>
<feature type="glycosylation site" description="O-linked (GlcNAc) serine" evidence="15 19">
    <location>
        <position position="395"/>
    </location>
</feature>
<feature type="splice variant" id="VSP_042024" description="In isoform 2." evidence="23">
    <original>NQSPTLTLQSTNTHTQSSSSSSDGGLFRSRPAHSLPPGEDGRVEPYVDFAEFYRLWSVDHGEQSVVTAP</original>
    <variation>KDPSRPASDLTAIPQCQLNLLGSLTPG</variation>
    <location>
        <begin position="436"/>
        <end position="504"/>
    </location>
</feature>
<feature type="sequence variant" id="VAR_039271" description="In dbSNP:rs17001096.">
    <original>D</original>
    <variation>E</variation>
    <location>
        <position position="224"/>
    </location>
</feature>
<feature type="mutagenesis site" description="Complete loss of ITCH-mediated ubiquitination." evidence="20">
    <original>Y</original>
    <variation>A</variation>
    <location>
        <position position="148"/>
    </location>
</feature>
<feature type="mutagenesis site" description="Loss of interaction with XIAP." evidence="13">
    <original>D</original>
    <variation>A</variation>
    <location>
        <position position="213"/>
    </location>
</feature>
<feature type="mutagenesis site" description="Loss of interaction with XIAP." evidence="13">
    <original>F</original>
    <variation>A</variation>
    <location>
        <position position="216"/>
    </location>
</feature>
<feature type="mutagenesis site" description="About 50% loss of IL-6 secretion after IL-1alpha stimulation." evidence="15">
    <original>S</original>
    <variation>A</variation>
    <location>
        <position position="395"/>
    </location>
</feature>
<feature type="mutagenesis site" description="Loss of phosphorylation site." evidence="12">
    <original>S</original>
    <variation>A</variation>
    <location>
        <position position="438"/>
    </location>
</feature>
<feature type="mutagenesis site" description="Abolishes interaction with MAP3K7." evidence="6">
    <original>F</original>
    <variation>A</variation>
    <location>
        <position position="484"/>
    </location>
</feature>
<feature type="turn" evidence="33">
    <location>
        <begin position="18"/>
        <end position="20"/>
    </location>
</feature>
<feature type="strand" evidence="33">
    <location>
        <begin position="27"/>
        <end position="32"/>
    </location>
</feature>
<feature type="strand" evidence="33">
    <location>
        <begin position="35"/>
        <end position="37"/>
    </location>
</feature>
<feature type="strand" evidence="33">
    <location>
        <begin position="39"/>
        <end position="42"/>
    </location>
</feature>
<feature type="strand" evidence="36">
    <location>
        <begin position="44"/>
        <end position="46"/>
    </location>
</feature>
<feature type="strand" evidence="33">
    <location>
        <begin position="51"/>
        <end position="58"/>
    </location>
</feature>
<feature type="turn" evidence="33">
    <location>
        <begin position="59"/>
        <end position="61"/>
    </location>
</feature>
<feature type="strand" evidence="33">
    <location>
        <begin position="62"/>
        <end position="74"/>
    </location>
</feature>
<feature type="helix" evidence="33">
    <location>
        <begin position="75"/>
        <end position="86"/>
    </location>
</feature>
<feature type="strand" evidence="33">
    <location>
        <begin position="89"/>
        <end position="92"/>
    </location>
</feature>
<feature type="strand" evidence="35">
    <location>
        <begin position="94"/>
        <end position="96"/>
    </location>
</feature>
<feature type="helix" evidence="33">
    <location>
        <begin position="99"/>
        <end position="133"/>
    </location>
</feature>
<feature type="helix" evidence="34">
    <location>
        <begin position="141"/>
        <end position="143"/>
    </location>
</feature>
<feature type="helix" evidence="33">
    <location>
        <begin position="146"/>
        <end position="148"/>
    </location>
</feature>
<feature type="helix" evidence="33">
    <location>
        <begin position="149"/>
        <end position="162"/>
    </location>
</feature>
<feature type="strand" evidence="33">
    <location>
        <begin position="165"/>
        <end position="174"/>
    </location>
</feature>
<feature type="strand" evidence="33">
    <location>
        <begin position="177"/>
        <end position="185"/>
    </location>
</feature>
<feature type="strand" evidence="33">
    <location>
        <begin position="187"/>
        <end position="193"/>
    </location>
</feature>
<feature type="strand" evidence="33">
    <location>
        <begin position="195"/>
        <end position="202"/>
    </location>
</feature>
<feature type="helix" evidence="33">
    <location>
        <begin position="212"/>
        <end position="219"/>
    </location>
</feature>
<feature type="turn" evidence="33">
    <location>
        <begin position="220"/>
        <end position="222"/>
    </location>
</feature>
<feature type="helix" evidence="33">
    <location>
        <begin position="225"/>
        <end position="231"/>
    </location>
</feature>
<feature type="strand" evidence="34">
    <location>
        <begin position="234"/>
        <end position="236"/>
    </location>
</feature>
<feature type="strand" evidence="34">
    <location>
        <begin position="239"/>
        <end position="241"/>
    </location>
</feature>
<feature type="helix" evidence="33">
    <location>
        <begin position="246"/>
        <end position="250"/>
    </location>
</feature>
<feature type="helix" evidence="33">
    <location>
        <begin position="252"/>
        <end position="254"/>
    </location>
</feature>
<feature type="turn" evidence="33">
    <location>
        <begin position="256"/>
        <end position="260"/>
    </location>
</feature>
<feature type="strand" evidence="33">
    <location>
        <begin position="265"/>
        <end position="267"/>
    </location>
</feature>
<feature type="strand" evidence="33">
    <location>
        <begin position="271"/>
        <end position="277"/>
    </location>
</feature>
<feature type="strand" evidence="33">
    <location>
        <begin position="283"/>
        <end position="288"/>
    </location>
</feature>
<feature type="helix" evidence="33">
    <location>
        <begin position="290"/>
        <end position="300"/>
    </location>
</feature>
<feature type="strand" evidence="35">
    <location>
        <begin position="302"/>
        <end position="304"/>
    </location>
</feature>
<feature type="helix" evidence="33">
    <location>
        <begin position="305"/>
        <end position="319"/>
    </location>
</feature>
<feature type="helix" evidence="33">
    <location>
        <begin position="323"/>
        <end position="343"/>
    </location>
</feature>
<feature type="helix" evidence="33">
    <location>
        <begin position="348"/>
        <end position="351"/>
    </location>
</feature>
<feature type="strand" evidence="33">
    <location>
        <begin position="353"/>
        <end position="355"/>
    </location>
</feature>
<feature type="strand" evidence="33">
    <location>
        <begin position="358"/>
        <end position="366"/>
    </location>
</feature>
<feature type="strand" evidence="37">
    <location>
        <begin position="475"/>
        <end position="478"/>
    </location>
</feature>
<feature type="helix" evidence="37">
    <location>
        <begin position="485"/>
        <end position="494"/>
    </location>
</feature>